<keyword id="KW-0914">Notch signaling pathway</keyword>
<keyword id="KW-1185">Reference proteome</keyword>
<gene>
    <name evidence="3" type="primary">E(spl)malpha-BFM</name>
    <name evidence="1" type="synonym">malpha</name>
    <name evidence="3" type="ORF">CG8337</name>
</gene>
<name>ESMA_DROME</name>
<comment type="function">
    <text>Part of the Notch signaling pathway.</text>
</comment>
<comment type="developmental stage">
    <text>Mesectodermal expression appears shortly before the onset of gastrulation. Later it is detected in the neuro-ectoderm as well as in the mesoderm in a highly dynamic pattern in many stages of embryogenesis. In imaginal disks, expressed as following: in the eye disk, within and posterior to the morphogenetic furrow; in the wing pouch, in the presumptive intervein regions and wing margin; in the leg disk, general expression.</text>
</comment>
<comment type="similarity">
    <text evidence="2">Belongs to the M4-like protein family.</text>
</comment>
<feature type="chain" id="PRO_0000087061" description="Enhancer of split malpha protein">
    <location>
        <begin position="1"/>
        <end position="138"/>
    </location>
</feature>
<accession>O97178</accession>
<accession>A8E6W7</accession>
<accession>Q56MK8</accession>
<accession>Q56MK9</accession>
<accession>Q56ML2</accession>
<accession>Q56ML4</accession>
<accession>Q56MM3</accession>
<accession>Q56MM6</accession>
<accession>Q56MN5</accession>
<accession>Q56MP7</accession>
<accession>Q56MQ1</accession>
<accession>Q56MQ4</accession>
<accession>Q56MT0</accession>
<accession>Q5S4K2</accession>
<protein>
    <recommendedName>
        <fullName evidence="1">Enhancer of split malpha protein</fullName>
        <shortName evidence="1">E(spl)malpha</shortName>
    </recommendedName>
</protein>
<sequence length="138" mass="15876">MCQQVVVVANTNNKMKTSYSIKQVLKTLFKKQQKQQQKPQGSLESLESVDNLRNAQVEEAYYAEIDENAANEKLAQLAHSQEFEIVEEQEDEEDVYVPVRFARTTAGTFFWTTNLQPVASVEPAMCYSMQFQDRWAQA</sequence>
<dbReference type="EMBL" id="AJ011140">
    <property type="protein sequence ID" value="CAB39164.1"/>
    <property type="molecule type" value="Genomic_DNA"/>
</dbReference>
<dbReference type="EMBL" id="AF115456">
    <property type="protein sequence ID" value="AAF12878.1"/>
    <property type="molecule type" value="Genomic_DNA"/>
</dbReference>
<dbReference type="EMBL" id="AY779906">
    <property type="protein sequence ID" value="AAV59052.1"/>
    <property type="molecule type" value="Genomic_DNA"/>
</dbReference>
<dbReference type="EMBL" id="AY779907">
    <property type="protein sequence ID" value="AAV59064.1"/>
    <property type="molecule type" value="Genomic_DNA"/>
</dbReference>
<dbReference type="EMBL" id="AY779908">
    <property type="protein sequence ID" value="AAV59076.1"/>
    <property type="molecule type" value="Genomic_DNA"/>
</dbReference>
<dbReference type="EMBL" id="AY779909">
    <property type="protein sequence ID" value="AAV59088.1"/>
    <property type="molecule type" value="Genomic_DNA"/>
</dbReference>
<dbReference type="EMBL" id="AY779910">
    <property type="protein sequence ID" value="AAV59100.1"/>
    <property type="molecule type" value="Genomic_DNA"/>
</dbReference>
<dbReference type="EMBL" id="AY779911">
    <property type="protein sequence ID" value="AAV59112.1"/>
    <property type="molecule type" value="Genomic_DNA"/>
</dbReference>
<dbReference type="EMBL" id="AY779912">
    <property type="protein sequence ID" value="AAV59124.1"/>
    <property type="molecule type" value="Genomic_DNA"/>
</dbReference>
<dbReference type="EMBL" id="AY779913">
    <property type="protein sequence ID" value="AAV59136.1"/>
    <property type="molecule type" value="Genomic_DNA"/>
</dbReference>
<dbReference type="EMBL" id="AY779914">
    <property type="protein sequence ID" value="AAV59148.1"/>
    <property type="molecule type" value="Genomic_DNA"/>
</dbReference>
<dbReference type="EMBL" id="AY779915">
    <property type="protein sequence ID" value="AAV59160.1"/>
    <property type="molecule type" value="Genomic_DNA"/>
</dbReference>
<dbReference type="EMBL" id="AY779916">
    <property type="protein sequence ID" value="AAV59172.1"/>
    <property type="molecule type" value="Genomic_DNA"/>
</dbReference>
<dbReference type="EMBL" id="AY779917">
    <property type="protein sequence ID" value="AAV59184.1"/>
    <property type="molecule type" value="Genomic_DNA"/>
</dbReference>
<dbReference type="EMBL" id="AY779918">
    <property type="protein sequence ID" value="AAV59196.1"/>
    <property type="molecule type" value="Genomic_DNA"/>
</dbReference>
<dbReference type="EMBL" id="AY779919">
    <property type="protein sequence ID" value="AAV59208.1"/>
    <property type="molecule type" value="Genomic_DNA"/>
</dbReference>
<dbReference type="EMBL" id="AY779920">
    <property type="protein sequence ID" value="AAV59220.1"/>
    <property type="molecule type" value="Genomic_DNA"/>
</dbReference>
<dbReference type="EMBL" id="AY779921">
    <property type="protein sequence ID" value="AAV59232.1"/>
    <property type="molecule type" value="Genomic_DNA"/>
</dbReference>
<dbReference type="EMBL" id="AE014297">
    <property type="protein sequence ID" value="AAF56547.1"/>
    <property type="molecule type" value="Genomic_DNA"/>
</dbReference>
<dbReference type="EMBL" id="BT030909">
    <property type="protein sequence ID" value="ABV82291.1"/>
    <property type="molecule type" value="mRNA"/>
</dbReference>
<dbReference type="EMBL" id="BT030931">
    <property type="protein sequence ID" value="ABV82313.1"/>
    <property type="molecule type" value="mRNA"/>
</dbReference>
<dbReference type="EMBL" id="BT030967">
    <property type="protein sequence ID" value="ABV82349.1"/>
    <property type="molecule type" value="mRNA"/>
</dbReference>
<dbReference type="EMBL" id="AY905812">
    <property type="protein sequence ID" value="AAX60158.1"/>
    <property type="molecule type" value="Genomic_DNA"/>
</dbReference>
<dbReference type="EMBL" id="AY905813">
    <property type="protein sequence ID" value="AAX60159.1"/>
    <property type="molecule type" value="Genomic_DNA"/>
</dbReference>
<dbReference type="EMBL" id="AY905814">
    <property type="protein sequence ID" value="AAX60160.1"/>
    <property type="molecule type" value="Genomic_DNA"/>
</dbReference>
<dbReference type="EMBL" id="AY905815">
    <property type="protein sequence ID" value="AAX60161.1"/>
    <property type="molecule type" value="Genomic_DNA"/>
</dbReference>
<dbReference type="EMBL" id="AY905816">
    <property type="protein sequence ID" value="AAX60162.1"/>
    <property type="molecule type" value="Genomic_DNA"/>
</dbReference>
<dbReference type="EMBL" id="AY905817">
    <property type="protein sequence ID" value="AAX60163.1"/>
    <property type="molecule type" value="Genomic_DNA"/>
</dbReference>
<dbReference type="EMBL" id="AY905818">
    <property type="protein sequence ID" value="AAX60164.1"/>
    <property type="molecule type" value="Genomic_DNA"/>
</dbReference>
<dbReference type="EMBL" id="AY905819">
    <property type="protein sequence ID" value="AAX60165.1"/>
    <property type="molecule type" value="Genomic_DNA"/>
</dbReference>
<dbReference type="EMBL" id="AY905820">
    <property type="protein sequence ID" value="AAX60166.1"/>
    <property type="molecule type" value="Genomic_DNA"/>
</dbReference>
<dbReference type="EMBL" id="AY905821">
    <property type="protein sequence ID" value="AAX60167.1"/>
    <property type="molecule type" value="Genomic_DNA"/>
</dbReference>
<dbReference type="EMBL" id="AY905822">
    <property type="protein sequence ID" value="AAX60168.1"/>
    <property type="molecule type" value="Genomic_DNA"/>
</dbReference>
<dbReference type="EMBL" id="AY905823">
    <property type="protein sequence ID" value="AAX60169.1"/>
    <property type="molecule type" value="Genomic_DNA"/>
</dbReference>
<dbReference type="EMBL" id="AY905824">
    <property type="protein sequence ID" value="AAX60170.1"/>
    <property type="molecule type" value="Genomic_DNA"/>
</dbReference>
<dbReference type="EMBL" id="AY905825">
    <property type="protein sequence ID" value="AAX60171.1"/>
    <property type="molecule type" value="Genomic_DNA"/>
</dbReference>
<dbReference type="EMBL" id="AY905826">
    <property type="protein sequence ID" value="AAX60172.1"/>
    <property type="molecule type" value="Genomic_DNA"/>
</dbReference>
<dbReference type="EMBL" id="AY905827">
    <property type="protein sequence ID" value="AAX60173.1"/>
    <property type="molecule type" value="Genomic_DNA"/>
</dbReference>
<dbReference type="EMBL" id="AY905828">
    <property type="protein sequence ID" value="AAX60174.1"/>
    <property type="molecule type" value="Genomic_DNA"/>
</dbReference>
<dbReference type="EMBL" id="AY905829">
    <property type="protein sequence ID" value="AAX60175.1"/>
    <property type="molecule type" value="Genomic_DNA"/>
</dbReference>
<dbReference type="EMBL" id="AY905830">
    <property type="protein sequence ID" value="AAX60176.1"/>
    <property type="molecule type" value="Genomic_DNA"/>
</dbReference>
<dbReference type="EMBL" id="AY905831">
    <property type="protein sequence ID" value="AAX60177.1"/>
    <property type="molecule type" value="Genomic_DNA"/>
</dbReference>
<dbReference type="EMBL" id="AY905832">
    <property type="protein sequence ID" value="AAX60178.1"/>
    <property type="molecule type" value="Genomic_DNA"/>
</dbReference>
<dbReference type="EMBL" id="AY905833">
    <property type="protein sequence ID" value="AAX60179.1"/>
    <property type="molecule type" value="Genomic_DNA"/>
</dbReference>
<dbReference type="EMBL" id="AY905834">
    <property type="protein sequence ID" value="AAX60180.1"/>
    <property type="molecule type" value="Genomic_DNA"/>
</dbReference>
<dbReference type="EMBL" id="AY905835">
    <property type="protein sequence ID" value="AAX60181.1"/>
    <property type="molecule type" value="Genomic_DNA"/>
</dbReference>
<dbReference type="EMBL" id="AY905836">
    <property type="protein sequence ID" value="AAX60182.1"/>
    <property type="molecule type" value="Genomic_DNA"/>
</dbReference>
<dbReference type="EMBL" id="AY905837">
    <property type="protein sequence ID" value="AAX60183.1"/>
    <property type="molecule type" value="Genomic_DNA"/>
</dbReference>
<dbReference type="EMBL" id="AY905838">
    <property type="protein sequence ID" value="AAX60184.1"/>
    <property type="molecule type" value="Genomic_DNA"/>
</dbReference>
<dbReference type="EMBL" id="AY905839">
    <property type="protein sequence ID" value="AAX60185.1"/>
    <property type="molecule type" value="Genomic_DNA"/>
</dbReference>
<dbReference type="EMBL" id="AY905840">
    <property type="protein sequence ID" value="AAX60186.1"/>
    <property type="molecule type" value="Genomic_DNA"/>
</dbReference>
<dbReference type="EMBL" id="AY905841">
    <property type="protein sequence ID" value="AAX60187.1"/>
    <property type="molecule type" value="Genomic_DNA"/>
</dbReference>
<dbReference type="EMBL" id="AY905842">
    <property type="protein sequence ID" value="AAX60188.1"/>
    <property type="molecule type" value="Genomic_DNA"/>
</dbReference>
<dbReference type="EMBL" id="AY905843">
    <property type="protein sequence ID" value="AAX60189.1"/>
    <property type="molecule type" value="Genomic_DNA"/>
</dbReference>
<dbReference type="EMBL" id="AY905844">
    <property type="protein sequence ID" value="AAX60190.1"/>
    <property type="molecule type" value="Genomic_DNA"/>
</dbReference>
<dbReference type="EMBL" id="AY905845">
    <property type="protein sequence ID" value="AAX60191.1"/>
    <property type="molecule type" value="Genomic_DNA"/>
</dbReference>
<dbReference type="EMBL" id="AY905846">
    <property type="protein sequence ID" value="AAX60192.1"/>
    <property type="molecule type" value="Genomic_DNA"/>
</dbReference>
<dbReference type="EMBL" id="AY905847">
    <property type="protein sequence ID" value="AAX60193.1"/>
    <property type="molecule type" value="Genomic_DNA"/>
</dbReference>
<dbReference type="EMBL" id="AY905848">
    <property type="protein sequence ID" value="AAX60194.1"/>
    <property type="molecule type" value="Genomic_DNA"/>
</dbReference>
<dbReference type="EMBL" id="AY905849">
    <property type="protein sequence ID" value="AAX60195.1"/>
    <property type="molecule type" value="Genomic_DNA"/>
</dbReference>
<dbReference type="EMBL" id="AY905850">
    <property type="protein sequence ID" value="AAX60196.1"/>
    <property type="molecule type" value="Genomic_DNA"/>
</dbReference>
<dbReference type="EMBL" id="AY905851">
    <property type="protein sequence ID" value="AAX60197.1"/>
    <property type="molecule type" value="Genomic_DNA"/>
</dbReference>
<dbReference type="EMBL" id="AY905852">
    <property type="protein sequence ID" value="AAX60198.1"/>
    <property type="molecule type" value="Genomic_DNA"/>
</dbReference>
<dbReference type="EMBL" id="AY905853">
    <property type="protein sequence ID" value="AAX60199.1"/>
    <property type="molecule type" value="Genomic_DNA"/>
</dbReference>
<dbReference type="EMBL" id="AY905854">
    <property type="protein sequence ID" value="AAX60200.1"/>
    <property type="molecule type" value="Genomic_DNA"/>
</dbReference>
<dbReference type="EMBL" id="AY905855">
    <property type="protein sequence ID" value="AAX60201.1"/>
    <property type="molecule type" value="Genomic_DNA"/>
</dbReference>
<dbReference type="EMBL" id="AY905856">
    <property type="protein sequence ID" value="AAX60202.1"/>
    <property type="molecule type" value="Genomic_DNA"/>
</dbReference>
<dbReference type="EMBL" id="AY905857">
    <property type="protein sequence ID" value="AAX60203.1"/>
    <property type="molecule type" value="Genomic_DNA"/>
</dbReference>
<dbReference type="EMBL" id="AY905858">
    <property type="protein sequence ID" value="AAX60204.1"/>
    <property type="molecule type" value="Genomic_DNA"/>
</dbReference>
<dbReference type="EMBL" id="AY905859">
    <property type="protein sequence ID" value="AAX60205.1"/>
    <property type="molecule type" value="Genomic_DNA"/>
</dbReference>
<dbReference type="EMBL" id="AY905860">
    <property type="protein sequence ID" value="AAX60206.1"/>
    <property type="molecule type" value="Genomic_DNA"/>
</dbReference>
<dbReference type="EMBL" id="AY905861">
    <property type="protein sequence ID" value="AAX60207.1"/>
    <property type="molecule type" value="Genomic_DNA"/>
</dbReference>
<dbReference type="EMBL" id="AY905862">
    <property type="protein sequence ID" value="AAX60208.1"/>
    <property type="molecule type" value="Genomic_DNA"/>
</dbReference>
<dbReference type="EMBL" id="AY905863">
    <property type="protein sequence ID" value="AAX60209.1"/>
    <property type="molecule type" value="Genomic_DNA"/>
</dbReference>
<dbReference type="EMBL" id="AY905864">
    <property type="protein sequence ID" value="AAX60210.1"/>
    <property type="molecule type" value="Genomic_DNA"/>
</dbReference>
<dbReference type="EMBL" id="AY905865">
    <property type="protein sequence ID" value="AAX60211.1"/>
    <property type="molecule type" value="Genomic_DNA"/>
</dbReference>
<dbReference type="EMBL" id="AY905866">
    <property type="protein sequence ID" value="AAX60212.1"/>
    <property type="molecule type" value="Genomic_DNA"/>
</dbReference>
<dbReference type="EMBL" id="AY905867">
    <property type="protein sequence ID" value="AAX60213.1"/>
    <property type="molecule type" value="Genomic_DNA"/>
</dbReference>
<dbReference type="EMBL" id="AY905868">
    <property type="protein sequence ID" value="AAX60214.1"/>
    <property type="molecule type" value="Genomic_DNA"/>
</dbReference>
<dbReference type="EMBL" id="AY905869">
    <property type="protein sequence ID" value="AAX60215.1"/>
    <property type="molecule type" value="Genomic_DNA"/>
</dbReference>
<dbReference type="EMBL" id="AY905870">
    <property type="protein sequence ID" value="AAX60216.1"/>
    <property type="molecule type" value="Genomic_DNA"/>
</dbReference>
<dbReference type="EMBL" id="AY905871">
    <property type="protein sequence ID" value="AAX60217.1"/>
    <property type="molecule type" value="Genomic_DNA"/>
</dbReference>
<dbReference type="EMBL" id="AY905872">
    <property type="protein sequence ID" value="AAX60218.1"/>
    <property type="molecule type" value="Genomic_DNA"/>
</dbReference>
<dbReference type="EMBL" id="AY905873">
    <property type="protein sequence ID" value="AAX60219.1"/>
    <property type="molecule type" value="Genomic_DNA"/>
</dbReference>
<dbReference type="EMBL" id="AY905874">
    <property type="protein sequence ID" value="AAX60220.1"/>
    <property type="molecule type" value="Genomic_DNA"/>
</dbReference>
<dbReference type="EMBL" id="AY905875">
    <property type="protein sequence ID" value="AAX60221.1"/>
    <property type="molecule type" value="Genomic_DNA"/>
</dbReference>
<dbReference type="EMBL" id="AY905876">
    <property type="protein sequence ID" value="AAX60222.1"/>
    <property type="molecule type" value="Genomic_DNA"/>
</dbReference>
<dbReference type="EMBL" id="AY905877">
    <property type="protein sequence ID" value="AAX60223.1"/>
    <property type="molecule type" value="Genomic_DNA"/>
</dbReference>
<dbReference type="EMBL" id="AY905878">
    <property type="protein sequence ID" value="AAX60224.1"/>
    <property type="molecule type" value="Genomic_DNA"/>
</dbReference>
<dbReference type="EMBL" id="AY905879">
    <property type="protein sequence ID" value="AAX60225.1"/>
    <property type="molecule type" value="Genomic_DNA"/>
</dbReference>
<dbReference type="EMBL" id="AY905880">
    <property type="protein sequence ID" value="AAX60226.1"/>
    <property type="molecule type" value="Genomic_DNA"/>
</dbReference>
<dbReference type="EMBL" id="AY905881">
    <property type="protein sequence ID" value="AAX60227.1"/>
    <property type="molecule type" value="Genomic_DNA"/>
</dbReference>
<dbReference type="EMBL" id="AY905882">
    <property type="protein sequence ID" value="AAX60228.1"/>
    <property type="molecule type" value="Genomic_DNA"/>
</dbReference>
<dbReference type="EMBL" id="AY905883">
    <property type="protein sequence ID" value="AAX60229.1"/>
    <property type="molecule type" value="Genomic_DNA"/>
</dbReference>
<dbReference type="EMBL" id="AY905884">
    <property type="protein sequence ID" value="AAX60230.1"/>
    <property type="molecule type" value="Genomic_DNA"/>
</dbReference>
<dbReference type="EMBL" id="AY905885">
    <property type="protein sequence ID" value="AAX60231.1"/>
    <property type="molecule type" value="Genomic_DNA"/>
</dbReference>
<dbReference type="EMBL" id="AY905886">
    <property type="protein sequence ID" value="AAX60232.1"/>
    <property type="molecule type" value="Genomic_DNA"/>
</dbReference>
<dbReference type="EMBL" id="AY905887">
    <property type="protein sequence ID" value="AAX60233.1"/>
    <property type="molecule type" value="Genomic_DNA"/>
</dbReference>
<dbReference type="EMBL" id="AY905888">
    <property type="protein sequence ID" value="AAX60234.1"/>
    <property type="molecule type" value="Genomic_DNA"/>
</dbReference>
<dbReference type="EMBL" id="AY905889">
    <property type="protein sequence ID" value="AAX60235.1"/>
    <property type="molecule type" value="Genomic_DNA"/>
</dbReference>
<dbReference type="EMBL" id="AY905890">
    <property type="protein sequence ID" value="AAX60236.1"/>
    <property type="molecule type" value="Genomic_DNA"/>
</dbReference>
<dbReference type="EMBL" id="AY905891">
    <property type="protein sequence ID" value="AAX60237.1"/>
    <property type="molecule type" value="Genomic_DNA"/>
</dbReference>
<dbReference type="EMBL" id="AY905892">
    <property type="protein sequence ID" value="AAX60238.1"/>
    <property type="molecule type" value="Genomic_DNA"/>
</dbReference>
<dbReference type="EMBL" id="AY905893">
    <property type="protein sequence ID" value="AAX60239.1"/>
    <property type="molecule type" value="Genomic_DNA"/>
</dbReference>
<dbReference type="EMBL" id="AY905894">
    <property type="protein sequence ID" value="AAX60240.1"/>
    <property type="molecule type" value="Genomic_DNA"/>
</dbReference>
<dbReference type="EMBL" id="AY905895">
    <property type="protein sequence ID" value="AAX60241.1"/>
    <property type="molecule type" value="Genomic_DNA"/>
</dbReference>
<dbReference type="EMBL" id="AY905896">
    <property type="protein sequence ID" value="AAX60242.1"/>
    <property type="molecule type" value="Genomic_DNA"/>
</dbReference>
<dbReference type="EMBL" id="AY905897">
    <property type="protein sequence ID" value="AAX60243.1"/>
    <property type="molecule type" value="Genomic_DNA"/>
</dbReference>
<dbReference type="EMBL" id="AY905898">
    <property type="protein sequence ID" value="AAX60244.1"/>
    <property type="molecule type" value="Genomic_DNA"/>
</dbReference>
<dbReference type="EMBL" id="AY905899">
    <property type="protein sequence ID" value="AAX60245.1"/>
    <property type="molecule type" value="Genomic_DNA"/>
</dbReference>
<dbReference type="RefSeq" id="NP_524506.1">
    <property type="nucleotide sequence ID" value="NM_079782.3"/>
</dbReference>
<dbReference type="BioGRID" id="68053">
    <property type="interactions" value="3"/>
</dbReference>
<dbReference type="FunCoup" id="O97178">
    <property type="interactions" value="1"/>
</dbReference>
<dbReference type="STRING" id="7227.FBpp0084330"/>
<dbReference type="PaxDb" id="7227-FBpp0084330"/>
<dbReference type="DNASU" id="43153"/>
<dbReference type="EnsemblMetazoa" id="FBtr0084956">
    <property type="protein sequence ID" value="FBpp0084330"/>
    <property type="gene ID" value="FBgn0002732"/>
</dbReference>
<dbReference type="GeneID" id="43153"/>
<dbReference type="KEGG" id="dme:Dmel_CG8337"/>
<dbReference type="AGR" id="FB:FBgn0002732"/>
<dbReference type="CTD" id="43153"/>
<dbReference type="FlyBase" id="FBgn0002732">
    <property type="gene designation" value="E(spl)malpha-BFM"/>
</dbReference>
<dbReference type="VEuPathDB" id="VectorBase:FBgn0002732"/>
<dbReference type="eggNOG" id="ENOG502T7XI">
    <property type="taxonomic scope" value="Eukaryota"/>
</dbReference>
<dbReference type="GeneTree" id="ENSGT00900000142304"/>
<dbReference type="HOGENOM" id="CLU_1688576_0_0_1"/>
<dbReference type="InParanoid" id="O97178"/>
<dbReference type="OMA" id="QYQDRWA"/>
<dbReference type="OrthoDB" id="8190494at2759"/>
<dbReference type="PhylomeDB" id="O97178"/>
<dbReference type="BioGRID-ORCS" id="43153">
    <property type="hits" value="0 hits in 1 CRISPR screen"/>
</dbReference>
<dbReference type="GenomeRNAi" id="43153"/>
<dbReference type="PRO" id="PR:O97178"/>
<dbReference type="Proteomes" id="UP000000803">
    <property type="component" value="Chromosome 3R"/>
</dbReference>
<dbReference type="Bgee" id="FBgn0002732">
    <property type="expression patterns" value="Expressed in adult enteroendocrine precursor cell in adult midgut (Drosophila) and 37 other cell types or tissues"/>
</dbReference>
<dbReference type="ExpressionAtlas" id="O97178">
    <property type="expression patterns" value="baseline and differential"/>
</dbReference>
<dbReference type="GO" id="GO:0031625">
    <property type="term" value="F:ubiquitin protein ligase binding"/>
    <property type="evidence" value="ECO:0000353"/>
    <property type="project" value="FlyBase"/>
</dbReference>
<dbReference type="GO" id="GO:0001708">
    <property type="term" value="P:cell fate specification"/>
    <property type="evidence" value="ECO:0000315"/>
    <property type="project" value="FlyBase"/>
</dbReference>
<dbReference type="GO" id="GO:0045746">
    <property type="term" value="P:negative regulation of Notch signaling pathway"/>
    <property type="evidence" value="ECO:0000315"/>
    <property type="project" value="FlyBase"/>
</dbReference>
<dbReference type="GO" id="GO:0007219">
    <property type="term" value="P:Notch signaling pathway"/>
    <property type="evidence" value="ECO:0007669"/>
    <property type="project" value="UniProtKB-KW"/>
</dbReference>
<dbReference type="GO" id="GO:0007423">
    <property type="term" value="P:sensory organ development"/>
    <property type="evidence" value="ECO:0000315"/>
    <property type="project" value="FlyBase"/>
</dbReference>
<dbReference type="InterPro" id="IPR029686">
    <property type="entry name" value="Malpha/m4/m2"/>
</dbReference>
<dbReference type="PANTHER" id="PTHR12254:SF0">
    <property type="entry name" value="BARBU-RELATED"/>
    <property type="match status" value="1"/>
</dbReference>
<dbReference type="PANTHER" id="PTHR12254">
    <property type="entry name" value="ENHANCER OF SPLIT MALPHA PROTEIN"/>
    <property type="match status" value="1"/>
</dbReference>
<dbReference type="Pfam" id="PF15952">
    <property type="entry name" value="ESM4"/>
    <property type="match status" value="1"/>
</dbReference>
<organism>
    <name type="scientific">Drosophila melanogaster</name>
    <name type="common">Fruit fly</name>
    <dbReference type="NCBI Taxonomy" id="7227"/>
    <lineage>
        <taxon>Eukaryota</taxon>
        <taxon>Metazoa</taxon>
        <taxon>Ecdysozoa</taxon>
        <taxon>Arthropoda</taxon>
        <taxon>Hexapoda</taxon>
        <taxon>Insecta</taxon>
        <taxon>Pterygota</taxon>
        <taxon>Neoptera</taxon>
        <taxon>Endopterygota</taxon>
        <taxon>Diptera</taxon>
        <taxon>Brachycera</taxon>
        <taxon>Muscomorpha</taxon>
        <taxon>Ephydroidea</taxon>
        <taxon>Drosophilidae</taxon>
        <taxon>Drosophila</taxon>
        <taxon>Sophophora</taxon>
    </lineage>
</organism>
<evidence type="ECO:0000303" key="1">
    <source>
    </source>
</evidence>
<evidence type="ECO:0000305" key="2"/>
<evidence type="ECO:0000312" key="3">
    <source>
        <dbReference type="FlyBase" id="FBgn0002732"/>
    </source>
</evidence>
<proteinExistence type="evidence at transcript level"/>
<reference key="1">
    <citation type="journal article" date="1999" name="Mech. Dev.">
        <title>The Enhancer of split complex of Drosophila melanogaster harbors three classes of Notch responsive genes.</title>
        <authorList>
            <person name="Wurmbach E."/>
            <person name="Wech I."/>
            <person name="Preiss A."/>
        </authorList>
    </citation>
    <scope>NUCLEOTIDE SEQUENCE [GENOMIC DNA]</scope>
    <source>
        <tissue>Embryo</tissue>
    </source>
</reference>
<reference key="2">
    <citation type="journal article" date="2000" name="Development">
        <title>Antagonism of Notch signaling activity by members of a novel protein family encoded by the Bearded and Enhancer of split gene complexes.</title>
        <authorList>
            <person name="Lai E.C."/>
            <person name="Bodner R."/>
            <person name="Kavaler J."/>
            <person name="Freschi G."/>
            <person name="Posakony J.W."/>
        </authorList>
    </citation>
    <scope>NUCLEOTIDE SEQUENCE [GENOMIC DNA]</scope>
    <source>
        <tissue>Embryo</tissue>
    </source>
</reference>
<reference key="3">
    <citation type="journal article" date="2005" name="Mol. Biol. Evol.">
        <title>Identifying signatures of selection at the enhancer of split neurogenic gene complex in Drosophila.</title>
        <authorList>
            <person name="Macdonald S.J."/>
            <person name="Long A.D."/>
        </authorList>
    </citation>
    <scope>NUCLEOTIDE SEQUENCE [GENOMIC DNA]</scope>
    <source>
        <strain>NVIII-1</strain>
        <strain>NVIII-18</strain>
        <strain>NVIII-2</strain>
        <strain>NVIII-22</strain>
        <strain>NVIII-24</strain>
        <strain>NVIII-28</strain>
        <strain>NVIII-41</strain>
        <strain>NVIII-42</strain>
        <strain>NVIII-46</strain>
        <strain>NVIII-5</strain>
        <strain>NVIII-9</strain>
        <strain>NVIII-m11</strain>
        <strain>NVIII-m12</strain>
        <strain>NVIII-m13</strain>
        <strain>NVIII-m15</strain>
        <strain>NVIII-m19</strain>
    </source>
</reference>
<reference key="4">
    <citation type="journal article" date="2000" name="Science">
        <title>The genome sequence of Drosophila melanogaster.</title>
        <authorList>
            <person name="Adams M.D."/>
            <person name="Celniker S.E."/>
            <person name="Holt R.A."/>
            <person name="Evans C.A."/>
            <person name="Gocayne J.D."/>
            <person name="Amanatides P.G."/>
            <person name="Scherer S.E."/>
            <person name="Li P.W."/>
            <person name="Hoskins R.A."/>
            <person name="Galle R.F."/>
            <person name="George R.A."/>
            <person name="Lewis S.E."/>
            <person name="Richards S."/>
            <person name="Ashburner M."/>
            <person name="Henderson S.N."/>
            <person name="Sutton G.G."/>
            <person name="Wortman J.R."/>
            <person name="Yandell M.D."/>
            <person name="Zhang Q."/>
            <person name="Chen L.X."/>
            <person name="Brandon R.C."/>
            <person name="Rogers Y.-H.C."/>
            <person name="Blazej R.G."/>
            <person name="Champe M."/>
            <person name="Pfeiffer B.D."/>
            <person name="Wan K.H."/>
            <person name="Doyle C."/>
            <person name="Baxter E.G."/>
            <person name="Helt G."/>
            <person name="Nelson C.R."/>
            <person name="Miklos G.L.G."/>
            <person name="Abril J.F."/>
            <person name="Agbayani A."/>
            <person name="An H.-J."/>
            <person name="Andrews-Pfannkoch C."/>
            <person name="Baldwin D."/>
            <person name="Ballew R.M."/>
            <person name="Basu A."/>
            <person name="Baxendale J."/>
            <person name="Bayraktaroglu L."/>
            <person name="Beasley E.M."/>
            <person name="Beeson K.Y."/>
            <person name="Benos P.V."/>
            <person name="Berman B.P."/>
            <person name="Bhandari D."/>
            <person name="Bolshakov S."/>
            <person name="Borkova D."/>
            <person name="Botchan M.R."/>
            <person name="Bouck J."/>
            <person name="Brokstein P."/>
            <person name="Brottier P."/>
            <person name="Burtis K.C."/>
            <person name="Busam D.A."/>
            <person name="Butler H."/>
            <person name="Cadieu E."/>
            <person name="Center A."/>
            <person name="Chandra I."/>
            <person name="Cherry J.M."/>
            <person name="Cawley S."/>
            <person name="Dahlke C."/>
            <person name="Davenport L.B."/>
            <person name="Davies P."/>
            <person name="de Pablos B."/>
            <person name="Delcher A."/>
            <person name="Deng Z."/>
            <person name="Mays A.D."/>
            <person name="Dew I."/>
            <person name="Dietz S.M."/>
            <person name="Dodson K."/>
            <person name="Doup L.E."/>
            <person name="Downes M."/>
            <person name="Dugan-Rocha S."/>
            <person name="Dunkov B.C."/>
            <person name="Dunn P."/>
            <person name="Durbin K.J."/>
            <person name="Evangelista C.C."/>
            <person name="Ferraz C."/>
            <person name="Ferriera S."/>
            <person name="Fleischmann W."/>
            <person name="Fosler C."/>
            <person name="Gabrielian A.E."/>
            <person name="Garg N.S."/>
            <person name="Gelbart W.M."/>
            <person name="Glasser K."/>
            <person name="Glodek A."/>
            <person name="Gong F."/>
            <person name="Gorrell J.H."/>
            <person name="Gu Z."/>
            <person name="Guan P."/>
            <person name="Harris M."/>
            <person name="Harris N.L."/>
            <person name="Harvey D.A."/>
            <person name="Heiman T.J."/>
            <person name="Hernandez J.R."/>
            <person name="Houck J."/>
            <person name="Hostin D."/>
            <person name="Houston K.A."/>
            <person name="Howland T.J."/>
            <person name="Wei M.-H."/>
            <person name="Ibegwam C."/>
            <person name="Jalali M."/>
            <person name="Kalush F."/>
            <person name="Karpen G.H."/>
            <person name="Ke Z."/>
            <person name="Kennison J.A."/>
            <person name="Ketchum K.A."/>
            <person name="Kimmel B.E."/>
            <person name="Kodira C.D."/>
            <person name="Kraft C.L."/>
            <person name="Kravitz S."/>
            <person name="Kulp D."/>
            <person name="Lai Z."/>
            <person name="Lasko P."/>
            <person name="Lei Y."/>
            <person name="Levitsky A.A."/>
            <person name="Li J.H."/>
            <person name="Li Z."/>
            <person name="Liang Y."/>
            <person name="Lin X."/>
            <person name="Liu X."/>
            <person name="Mattei B."/>
            <person name="McIntosh T.C."/>
            <person name="McLeod M.P."/>
            <person name="McPherson D."/>
            <person name="Merkulov G."/>
            <person name="Milshina N.V."/>
            <person name="Mobarry C."/>
            <person name="Morris J."/>
            <person name="Moshrefi A."/>
            <person name="Mount S.M."/>
            <person name="Moy M."/>
            <person name="Murphy B."/>
            <person name="Murphy L."/>
            <person name="Muzny D.M."/>
            <person name="Nelson D.L."/>
            <person name="Nelson D.R."/>
            <person name="Nelson K.A."/>
            <person name="Nixon K."/>
            <person name="Nusskern D.R."/>
            <person name="Pacleb J.M."/>
            <person name="Palazzolo M."/>
            <person name="Pittman G.S."/>
            <person name="Pan S."/>
            <person name="Pollard J."/>
            <person name="Puri V."/>
            <person name="Reese M.G."/>
            <person name="Reinert K."/>
            <person name="Remington K."/>
            <person name="Saunders R.D.C."/>
            <person name="Scheeler F."/>
            <person name="Shen H."/>
            <person name="Shue B.C."/>
            <person name="Siden-Kiamos I."/>
            <person name="Simpson M."/>
            <person name="Skupski M.P."/>
            <person name="Smith T.J."/>
            <person name="Spier E."/>
            <person name="Spradling A.C."/>
            <person name="Stapleton M."/>
            <person name="Strong R."/>
            <person name="Sun E."/>
            <person name="Svirskas R."/>
            <person name="Tector C."/>
            <person name="Turner R."/>
            <person name="Venter E."/>
            <person name="Wang A.H."/>
            <person name="Wang X."/>
            <person name="Wang Z.-Y."/>
            <person name="Wassarman D.A."/>
            <person name="Weinstock G.M."/>
            <person name="Weissenbach J."/>
            <person name="Williams S.M."/>
            <person name="Woodage T."/>
            <person name="Worley K.C."/>
            <person name="Wu D."/>
            <person name="Yang S."/>
            <person name="Yao Q.A."/>
            <person name="Ye J."/>
            <person name="Yeh R.-F."/>
            <person name="Zaveri J.S."/>
            <person name="Zhan M."/>
            <person name="Zhang G."/>
            <person name="Zhao Q."/>
            <person name="Zheng L."/>
            <person name="Zheng X.H."/>
            <person name="Zhong F.N."/>
            <person name="Zhong W."/>
            <person name="Zhou X."/>
            <person name="Zhu S.C."/>
            <person name="Zhu X."/>
            <person name="Smith H.O."/>
            <person name="Gibbs R.A."/>
            <person name="Myers E.W."/>
            <person name="Rubin G.M."/>
            <person name="Venter J.C."/>
        </authorList>
    </citation>
    <scope>NUCLEOTIDE SEQUENCE [LARGE SCALE GENOMIC DNA]</scope>
    <source>
        <strain>Berkeley</strain>
    </source>
</reference>
<reference key="5">
    <citation type="journal article" date="2002" name="Genome Biol.">
        <title>Annotation of the Drosophila melanogaster euchromatic genome: a systematic review.</title>
        <authorList>
            <person name="Misra S."/>
            <person name="Crosby M.A."/>
            <person name="Mungall C.J."/>
            <person name="Matthews B.B."/>
            <person name="Campbell K.S."/>
            <person name="Hradecky P."/>
            <person name="Huang Y."/>
            <person name="Kaminker J.S."/>
            <person name="Millburn G.H."/>
            <person name="Prochnik S.E."/>
            <person name="Smith C.D."/>
            <person name="Tupy J.L."/>
            <person name="Whitfield E.J."/>
            <person name="Bayraktaroglu L."/>
            <person name="Berman B.P."/>
            <person name="Bettencourt B.R."/>
            <person name="Celniker S.E."/>
            <person name="de Grey A.D.N.J."/>
            <person name="Drysdale R.A."/>
            <person name="Harris N.L."/>
            <person name="Richter J."/>
            <person name="Russo S."/>
            <person name="Schroeder A.J."/>
            <person name="Shu S.Q."/>
            <person name="Stapleton M."/>
            <person name="Yamada C."/>
            <person name="Ashburner M."/>
            <person name="Gelbart W.M."/>
            <person name="Rubin G.M."/>
            <person name="Lewis S.E."/>
        </authorList>
    </citation>
    <scope>GENOME REANNOTATION</scope>
    <source>
        <strain>Berkeley</strain>
    </source>
</reference>
<reference key="6">
    <citation type="submission" date="2008-05" db="EMBL/GenBank/DDBJ databases">
        <authorList>
            <person name="Stapleton M."/>
            <person name="Booth B."/>
            <person name="Carlson J.W."/>
            <person name="Frise E."/>
            <person name="Kapadia B."/>
            <person name="Park S."/>
            <person name="Wan K.H."/>
            <person name="Yu C."/>
            <person name="Celniker S.E."/>
        </authorList>
    </citation>
    <scope>NUCLEOTIDE SEQUENCE [LARGE SCALE MRNA]</scope>
    <source>
        <strain>Berkeley</strain>
    </source>
</reference>
<reference key="7">
    <citation type="journal article" date="2005" name="Genome Biol.">
        <title>A low-cost open-source SNP genotyping platform for association mapping applications.</title>
        <authorList>
            <person name="Macdonald S.J."/>
            <person name="Pastinen T."/>
            <person name="Genissel A."/>
            <person name="Cornforth T.W."/>
            <person name="Long A.D."/>
        </authorList>
    </citation>
    <scope>NUCLEOTIDE SEQUENCE [GENOMIC DNA] OF 34-138</scope>
    <source>
        <strain>Nv2001_m0470</strain>
        <strain>Nv2001_m0471</strain>
        <strain>Nv2001_m0472</strain>
        <strain>Nv2001_m0473</strain>
        <strain>Nv2001_m0474</strain>
        <strain>Nv2001_m0475</strain>
        <strain>Nv2001_m0476</strain>
        <strain>Nv2001_m0477</strain>
        <strain>Nv2001_m0478</strain>
        <strain>Nv2001_m0479</strain>
        <strain>Nv2001_m0480</strain>
        <strain>Nv2001_m0481</strain>
        <strain>Nv2001_m0482</strain>
        <strain>Nv2001_m0483</strain>
        <strain>Nv2001_m0484</strain>
        <strain>Nv2001_m0485</strain>
        <strain>Nv2001_m0486</strain>
        <strain>Nv2001_m0488</strain>
        <strain>Nv2001_m0489</strain>
        <strain>Nv2001_m0490</strain>
        <strain>Nv2001_m0491</strain>
        <strain>Nv2001_m0492</strain>
        <strain>Nv2001_m0493</strain>
        <strain>Nv2001_m0494</strain>
        <strain>Nv2001_m0495</strain>
        <strain>Nv2001_m0496</strain>
        <strain>Nv2001_m0498</strain>
        <strain>Nv2001_m0499</strain>
        <strain>Nv2001_m0500</strain>
        <strain>Nv2001_m0501</strain>
        <strain>Nv2001_m0502</strain>
        <strain>Nv2001_m0503</strain>
        <strain>Nv2001_m0504</strain>
        <strain>Nv2001_m0506</strain>
        <strain>Nv2001_m0507</strain>
        <strain>Nv2001_m0508</strain>
        <strain>Nv2001_m0509</strain>
        <strain>Nv2001_m0510</strain>
        <strain>Nv2001_m0511</strain>
        <strain>Nv2001_m0512</strain>
        <strain>Nv2001_m0513</strain>
        <strain>Nv2001_m0514</strain>
        <strain>Nv2001_m0515</strain>
        <strain>Nv2001_m0516</strain>
        <strain>Nv2001_m0517</strain>
        <strain>Nv2001_m0518</strain>
        <strain>Nv2001_m0519</strain>
        <strain>Nv2001_m0520</strain>
        <strain>Nv2001_m0521</strain>
        <strain>Nv2001_m0522</strain>
        <strain>Nv2001_m0523</strain>
        <strain>Nv2001_m0524</strain>
        <strain>Nv2001_m0526</strain>
        <strain>Nv2001_m0527</strain>
        <strain>Nv2001_m0528</strain>
        <strain>Nv2001_m0530</strain>
        <strain>Nv2001_m0531</strain>
        <strain>Nv2001_m0532</strain>
        <strain>Nv2001_m0533</strain>
        <strain>Nv2001_m0534</strain>
        <strain>Nv2001_m0535</strain>
        <strain>Nv2001_m0536</strain>
        <strain>Nv2001_m0537</strain>
        <strain>Nv2001_m0538</strain>
        <strain>Nv2001_m0539</strain>
        <strain>Nv2001_m0540</strain>
        <strain>Nv2001_m0541</strain>
        <strain>Nv2001_m0542</strain>
        <strain>Nv2001_m0543</strain>
        <strain>Nv2001_m0544</strain>
        <strain>Nv2001_m0545</strain>
        <strain>Nv2001_m0546</strain>
        <strain>Nv2001_m0547</strain>
        <strain>Nv2001_m0549</strain>
        <strain>Nv2001_m0550</strain>
        <strain>Nv2001_m0551</strain>
        <strain>Nv2001_m0552</strain>
        <strain>Nv2001_m0553</strain>
        <strain>Nv2001_m0554</strain>
        <strain>Nv2001_m0555</strain>
        <strain>Nv2001_m0556</strain>
        <strain>Nv2001_m0557</strain>
        <strain>Nv2001_m0558</strain>
        <strain>Nv2001_m0559</strain>
        <strain>Nv2001_m0560</strain>
        <strain>Nv2001_m0561</strain>
        <strain>Nv2001_m0562</strain>
        <strain>Nv2001_m0563</strain>
    </source>
</reference>